<proteinExistence type="evidence at protein level"/>
<keyword id="KW-0002">3D-structure</keyword>
<keyword id="KW-0968">Cytoplasmic vesicle</keyword>
<keyword id="KW-0375">Hydrogen ion transport</keyword>
<keyword id="KW-0406">Ion transport</keyword>
<keyword id="KW-0472">Membrane</keyword>
<keyword id="KW-1185">Reference proteome</keyword>
<keyword id="KW-0770">Synapse</keyword>
<keyword id="KW-0812">Transmembrane</keyword>
<keyword id="KW-1133">Transmembrane helix</keyword>
<keyword id="KW-0813">Transport</keyword>
<keyword id="KW-0832">Ubl conjugation</keyword>
<reference key="1">
    <citation type="journal article" date="1991" name="Biochem. Biophys. Res. Commun.">
        <title>Molecular cloning of cDNA encoding the 16 KDa subunit of vacuolar H(+)-ATPase from mouse cerebellum.</title>
        <authorList>
            <person name="Hanada H."/>
            <person name="Hasebe M."/>
            <person name="Moriyama Y."/>
            <person name="Maeda M."/>
            <person name="Futai M."/>
        </authorList>
    </citation>
    <scope>NUCLEOTIDE SEQUENCE [MRNA]</scope>
    <source>
        <tissue>Brain</tissue>
    </source>
</reference>
<reference key="2">
    <citation type="journal article" date="1996" name="Mol. Biol. Cell">
        <title>Resorption-cycle-dependent polarization of mRNAs for different subunits of V-ATPase in bone-resorbing osteoclasts.</title>
        <authorList>
            <person name="Laitala T."/>
            <person name="Howell M.L."/>
            <person name="Dean G.E."/>
            <person name="Vaananen H.K."/>
        </authorList>
    </citation>
    <scope>NUCLEOTIDE SEQUENCE [GENOMIC DNA]</scope>
</reference>
<reference key="3">
    <citation type="journal article" date="2001" name="Gene">
        <title>The murine genome contains one functional gene and two pseudogenes coding for the 16 kDa proteolipid subunit of vacuolar H+-ATPase.</title>
        <authorList>
            <person name="Hayami K."/>
            <person name="Noumi T."/>
            <person name="Inoue H."/>
            <person name="Sun-Wada G.H."/>
            <person name="Yoshimizu T."/>
            <person name="Kanazawa H."/>
        </authorList>
    </citation>
    <scope>NUCLEOTIDE SEQUENCE [GENOMIC DNA]</scope>
</reference>
<reference key="4">
    <citation type="journal article" date="2001" name="J. Biol. Chem.">
        <title>Expression and localization of the mouse homolog of the yeast V-ATPase 21-kDa subunit c' (Vma16p).</title>
        <authorList>
            <person name="Nishi T."/>
            <person name="Kawasaki-Nishi S."/>
            <person name="Forgac M."/>
        </authorList>
    </citation>
    <scope>NUCLEOTIDE SEQUENCE [GENOMIC DNA]</scope>
    <source>
        <strain>BALB/cJ</strain>
    </source>
</reference>
<reference key="5">
    <citation type="journal article" date="2005" name="Science">
        <title>The transcriptional landscape of the mammalian genome.</title>
        <authorList>
            <person name="Carninci P."/>
            <person name="Kasukawa T."/>
            <person name="Katayama S."/>
            <person name="Gough J."/>
            <person name="Frith M.C."/>
            <person name="Maeda N."/>
            <person name="Oyama R."/>
            <person name="Ravasi T."/>
            <person name="Lenhard B."/>
            <person name="Wells C."/>
            <person name="Kodzius R."/>
            <person name="Shimokawa K."/>
            <person name="Bajic V.B."/>
            <person name="Brenner S.E."/>
            <person name="Batalov S."/>
            <person name="Forrest A.R."/>
            <person name="Zavolan M."/>
            <person name="Davis M.J."/>
            <person name="Wilming L.G."/>
            <person name="Aidinis V."/>
            <person name="Allen J.E."/>
            <person name="Ambesi-Impiombato A."/>
            <person name="Apweiler R."/>
            <person name="Aturaliya R.N."/>
            <person name="Bailey T.L."/>
            <person name="Bansal M."/>
            <person name="Baxter L."/>
            <person name="Beisel K.W."/>
            <person name="Bersano T."/>
            <person name="Bono H."/>
            <person name="Chalk A.M."/>
            <person name="Chiu K.P."/>
            <person name="Choudhary V."/>
            <person name="Christoffels A."/>
            <person name="Clutterbuck D.R."/>
            <person name="Crowe M.L."/>
            <person name="Dalla E."/>
            <person name="Dalrymple B.P."/>
            <person name="de Bono B."/>
            <person name="Della Gatta G."/>
            <person name="di Bernardo D."/>
            <person name="Down T."/>
            <person name="Engstrom P."/>
            <person name="Fagiolini M."/>
            <person name="Faulkner G."/>
            <person name="Fletcher C.F."/>
            <person name="Fukushima T."/>
            <person name="Furuno M."/>
            <person name="Futaki S."/>
            <person name="Gariboldi M."/>
            <person name="Georgii-Hemming P."/>
            <person name="Gingeras T.R."/>
            <person name="Gojobori T."/>
            <person name="Green R.E."/>
            <person name="Gustincich S."/>
            <person name="Harbers M."/>
            <person name="Hayashi Y."/>
            <person name="Hensch T.K."/>
            <person name="Hirokawa N."/>
            <person name="Hill D."/>
            <person name="Huminiecki L."/>
            <person name="Iacono M."/>
            <person name="Ikeo K."/>
            <person name="Iwama A."/>
            <person name="Ishikawa T."/>
            <person name="Jakt M."/>
            <person name="Kanapin A."/>
            <person name="Katoh M."/>
            <person name="Kawasawa Y."/>
            <person name="Kelso J."/>
            <person name="Kitamura H."/>
            <person name="Kitano H."/>
            <person name="Kollias G."/>
            <person name="Krishnan S.P."/>
            <person name="Kruger A."/>
            <person name="Kummerfeld S.K."/>
            <person name="Kurochkin I.V."/>
            <person name="Lareau L.F."/>
            <person name="Lazarevic D."/>
            <person name="Lipovich L."/>
            <person name="Liu J."/>
            <person name="Liuni S."/>
            <person name="McWilliam S."/>
            <person name="Madan Babu M."/>
            <person name="Madera M."/>
            <person name="Marchionni L."/>
            <person name="Matsuda H."/>
            <person name="Matsuzawa S."/>
            <person name="Miki H."/>
            <person name="Mignone F."/>
            <person name="Miyake S."/>
            <person name="Morris K."/>
            <person name="Mottagui-Tabar S."/>
            <person name="Mulder N."/>
            <person name="Nakano N."/>
            <person name="Nakauchi H."/>
            <person name="Ng P."/>
            <person name="Nilsson R."/>
            <person name="Nishiguchi S."/>
            <person name="Nishikawa S."/>
            <person name="Nori F."/>
            <person name="Ohara O."/>
            <person name="Okazaki Y."/>
            <person name="Orlando V."/>
            <person name="Pang K.C."/>
            <person name="Pavan W.J."/>
            <person name="Pavesi G."/>
            <person name="Pesole G."/>
            <person name="Petrovsky N."/>
            <person name="Piazza S."/>
            <person name="Reed J."/>
            <person name="Reid J.F."/>
            <person name="Ring B.Z."/>
            <person name="Ringwald M."/>
            <person name="Rost B."/>
            <person name="Ruan Y."/>
            <person name="Salzberg S.L."/>
            <person name="Sandelin A."/>
            <person name="Schneider C."/>
            <person name="Schoenbach C."/>
            <person name="Sekiguchi K."/>
            <person name="Semple C.A."/>
            <person name="Seno S."/>
            <person name="Sessa L."/>
            <person name="Sheng Y."/>
            <person name="Shibata Y."/>
            <person name="Shimada H."/>
            <person name="Shimada K."/>
            <person name="Silva D."/>
            <person name="Sinclair B."/>
            <person name="Sperling S."/>
            <person name="Stupka E."/>
            <person name="Sugiura K."/>
            <person name="Sultana R."/>
            <person name="Takenaka Y."/>
            <person name="Taki K."/>
            <person name="Tammoja K."/>
            <person name="Tan S.L."/>
            <person name="Tang S."/>
            <person name="Taylor M.S."/>
            <person name="Tegner J."/>
            <person name="Teichmann S.A."/>
            <person name="Ueda H.R."/>
            <person name="van Nimwegen E."/>
            <person name="Verardo R."/>
            <person name="Wei C.L."/>
            <person name="Yagi K."/>
            <person name="Yamanishi H."/>
            <person name="Zabarovsky E."/>
            <person name="Zhu S."/>
            <person name="Zimmer A."/>
            <person name="Hide W."/>
            <person name="Bult C."/>
            <person name="Grimmond S.M."/>
            <person name="Teasdale R.D."/>
            <person name="Liu E.T."/>
            <person name="Brusic V."/>
            <person name="Quackenbush J."/>
            <person name="Wahlestedt C."/>
            <person name="Mattick J.S."/>
            <person name="Hume D.A."/>
            <person name="Kai C."/>
            <person name="Sasaki D."/>
            <person name="Tomaru Y."/>
            <person name="Fukuda S."/>
            <person name="Kanamori-Katayama M."/>
            <person name="Suzuki M."/>
            <person name="Aoki J."/>
            <person name="Arakawa T."/>
            <person name="Iida J."/>
            <person name="Imamura K."/>
            <person name="Itoh M."/>
            <person name="Kato T."/>
            <person name="Kawaji H."/>
            <person name="Kawagashira N."/>
            <person name="Kawashima T."/>
            <person name="Kojima M."/>
            <person name="Kondo S."/>
            <person name="Konno H."/>
            <person name="Nakano K."/>
            <person name="Ninomiya N."/>
            <person name="Nishio T."/>
            <person name="Okada M."/>
            <person name="Plessy C."/>
            <person name="Shibata K."/>
            <person name="Shiraki T."/>
            <person name="Suzuki S."/>
            <person name="Tagami M."/>
            <person name="Waki K."/>
            <person name="Watahiki A."/>
            <person name="Okamura-Oho Y."/>
            <person name="Suzuki H."/>
            <person name="Kawai J."/>
            <person name="Hayashizaki Y."/>
        </authorList>
    </citation>
    <scope>NUCLEOTIDE SEQUENCE [LARGE SCALE MRNA]</scope>
    <source>
        <strain>C57BL/6J</strain>
        <strain>NOD</strain>
        <tissue>Kidney</tissue>
    </source>
</reference>
<reference key="6">
    <citation type="journal article" date="2001" name="J. Biol. Chem.">
        <title>Molecular cloning and characterization of Atp6n1b: a novel fourth murine vacuolar H+-ATPase a-subunit gene.</title>
        <authorList>
            <person name="Smith A.N."/>
            <person name="Finberg K.E."/>
            <person name="Wagner C.A."/>
            <person name="Lifton R.P."/>
            <person name="Devonald M.A."/>
            <person name="Su Y."/>
            <person name="Karet F.E."/>
        </authorList>
    </citation>
    <scope>INTERACTION WITH ATP6V0A4</scope>
    <source>
        <strain>NOD</strain>
        <tissue>Kidney</tissue>
    </source>
</reference>
<reference key="7">
    <citation type="journal article" date="2010" name="Cell">
        <title>A tissue-specific atlas of mouse protein phosphorylation and expression.</title>
        <authorList>
            <person name="Huttlin E.L."/>
            <person name="Jedrychowski M.P."/>
            <person name="Elias J.E."/>
            <person name="Goswami T."/>
            <person name="Rad R."/>
            <person name="Beausoleil S.A."/>
            <person name="Villen J."/>
            <person name="Haas W."/>
            <person name="Sowa M.E."/>
            <person name="Gygi S.P."/>
        </authorList>
    </citation>
    <scope>IDENTIFICATION BY MASS SPECTROMETRY [LARGE SCALE ANALYSIS]</scope>
    <source>
        <tissue>Brain</tissue>
        <tissue>Heart</tissue>
        <tissue>Kidney</tissue>
        <tissue>Liver</tissue>
        <tissue>Lung</tissue>
    </source>
</reference>
<accession>P63082</accession>
<accession>P23967</accession>
<accession>Q3TD69</accession>
<comment type="function">
    <text evidence="1 2">Proton-conducting pore forming subunit of the V0 complex of vacuolar(H+)-ATPase (V-ATPase), a multisubunit enzyme composed of a peripheral complex (V1) that hydrolyzes ATP and a membrane integral complex (V0) that translocates protons (By similarity). V-ATPase is responsible for acidifying and maintaining the pH of intracellular compartments and in some cell types, is targeted to the plasma membrane, where it is responsible for acidifying the extracellular environment (By similarity).</text>
</comment>
<comment type="subunit">
    <text evidence="2 5">V-ATPase is a heteromultimeric enzyme made up of two complexes: the ATP-hydrolytic V1 complex and the proton translocation V0 complex (By similarity). The V1 complex consists of three catalytic AB heterodimers that form a heterohexamer, three peripheral stalks each consisting of EG heterodimers, one central rotor including subunits D and F, and the regulatory subunits C and H (By similarity). The proton translocation complex V0 consists of the proton transport subunit a, a ring of proteolipid subunits c9c'', rotary subunit d, subunits e and f, and the accessory subunits ATP6AP1/Ac45 and ATP6AP2/PRR (By similarity). Interacts with the V0 complex V-ATPase subunit a4 ATP6V0A4 (PubMed:11495928). Interacts with LASS2 (By similarity). Interacts with RNF182; this interaction leads to ubiquitination and degradation via the proteasome pathway (By similarity).</text>
</comment>
<comment type="subcellular location">
    <subcellularLocation>
        <location evidence="3">Cytoplasmic vesicle</location>
        <location evidence="3">Clathrin-coated vesicle membrane</location>
        <topology evidence="4">Multi-pass membrane protein</topology>
    </subcellularLocation>
    <subcellularLocation>
        <location evidence="3">Cytoplasmic vesicle</location>
        <location evidence="3">Secretory vesicle</location>
        <location evidence="3">Synaptic vesicle membrane</location>
        <topology evidence="4">Multi-pass membrane protein</topology>
    </subcellularLocation>
</comment>
<comment type="PTM">
    <text evidence="2">Ubiquitinated by RNF182, leading to its degradation via the ubiquitin-proteasome pathway.</text>
</comment>
<comment type="similarity">
    <text evidence="6">Belongs to the V-ATPase proteolipid subunit family.</text>
</comment>
<dbReference type="EMBL" id="M64298">
    <property type="protein sequence ID" value="AAA39775.1"/>
    <property type="molecule type" value="mRNA"/>
</dbReference>
<dbReference type="EMBL" id="U13842">
    <property type="protein sequence ID" value="AAC52413.1"/>
    <property type="molecule type" value="Genomic_DNA"/>
</dbReference>
<dbReference type="EMBL" id="AB059662">
    <property type="protein sequence ID" value="BAB64538.1"/>
    <property type="molecule type" value="Genomic_DNA"/>
</dbReference>
<dbReference type="EMBL" id="AF356008">
    <property type="protein sequence ID" value="AAL02098.1"/>
    <property type="molecule type" value="Genomic_DNA"/>
</dbReference>
<dbReference type="EMBL" id="AK002570">
    <property type="protein sequence ID" value="BAB22195.1"/>
    <property type="molecule type" value="mRNA"/>
</dbReference>
<dbReference type="EMBL" id="AK002871">
    <property type="protein sequence ID" value="BAB22419.1"/>
    <property type="molecule type" value="mRNA"/>
</dbReference>
<dbReference type="EMBL" id="AK170346">
    <property type="protein sequence ID" value="BAE41735.1"/>
    <property type="molecule type" value="mRNA"/>
</dbReference>
<dbReference type="CCDS" id="CCDS28476.1"/>
<dbReference type="PIR" id="JN0063">
    <property type="entry name" value="JN0063"/>
</dbReference>
<dbReference type="RefSeq" id="NP_001348461.1">
    <property type="nucleotide sequence ID" value="NM_001361532.1"/>
</dbReference>
<dbReference type="RefSeq" id="NP_033859.1">
    <property type="nucleotide sequence ID" value="NM_009729.4"/>
</dbReference>
<dbReference type="PDB" id="9BRA">
    <property type="method" value="EM"/>
    <property type="resolution" value="4.30 A"/>
    <property type="chains" value="g/h/i/j/k/l/m/n/o=1-155"/>
</dbReference>
<dbReference type="PDB" id="9BRQ">
    <property type="method" value="EM"/>
    <property type="resolution" value="4.30 A"/>
    <property type="chains" value="g/h/i/j/k/l/m/n/o=1-155"/>
</dbReference>
<dbReference type="PDB" id="9BRR">
    <property type="method" value="EM"/>
    <property type="resolution" value="4.50 A"/>
    <property type="chains" value="g/h/i/j/k/l/m/n/o=1-155"/>
</dbReference>
<dbReference type="PDB" id="9BRS">
    <property type="method" value="EM"/>
    <property type="resolution" value="4.40 A"/>
    <property type="chains" value="g/h/i/j/k/l/m/n/o=1-155"/>
</dbReference>
<dbReference type="PDB" id="9BRT">
    <property type="method" value="EM"/>
    <property type="resolution" value="4.30 A"/>
    <property type="chains" value="g/h/i/j/k/l/m/n/o=1-155"/>
</dbReference>
<dbReference type="PDB" id="9BRU">
    <property type="method" value="EM"/>
    <property type="resolution" value="4.40 A"/>
    <property type="chains" value="g/h/i/j/k/l/m/n/o=1-155"/>
</dbReference>
<dbReference type="PDB" id="9BRY">
    <property type="method" value="EM"/>
    <property type="resolution" value="3.60 A"/>
    <property type="chains" value="g/h/i/j/k/l/m/n/o=1-155"/>
</dbReference>
<dbReference type="PDB" id="9BRZ">
    <property type="method" value="EM"/>
    <property type="resolution" value="3.80 A"/>
    <property type="chains" value="g/h/i/j/k/l/m/n/o=1-155"/>
</dbReference>
<dbReference type="PDBsum" id="9BRA"/>
<dbReference type="PDBsum" id="9BRQ"/>
<dbReference type="PDBsum" id="9BRR"/>
<dbReference type="PDBsum" id="9BRS"/>
<dbReference type="PDBsum" id="9BRT"/>
<dbReference type="PDBsum" id="9BRU"/>
<dbReference type="PDBsum" id="9BRY"/>
<dbReference type="PDBsum" id="9BRZ"/>
<dbReference type="EMDB" id="EMD-44839"/>
<dbReference type="EMDB" id="EMD-44840"/>
<dbReference type="EMDB" id="EMD-44841"/>
<dbReference type="EMDB" id="EMD-44842"/>
<dbReference type="EMDB" id="EMD-44843"/>
<dbReference type="EMDB" id="EMD-44844"/>
<dbReference type="EMDB" id="EMD-44845"/>
<dbReference type="EMDB" id="EMD-44846"/>
<dbReference type="SMR" id="P63082"/>
<dbReference type="BioGRID" id="198274">
    <property type="interactions" value="7"/>
</dbReference>
<dbReference type="FunCoup" id="P63082">
    <property type="interactions" value="1527"/>
</dbReference>
<dbReference type="IntAct" id="P63082">
    <property type="interactions" value="3"/>
</dbReference>
<dbReference type="MINT" id="P63082"/>
<dbReference type="STRING" id="10090.ENSMUSP00000024932"/>
<dbReference type="TCDB" id="3.A.2.2.6">
    <property type="family name" value="the h+- or na+-translocating f-type, v-type and a-type atpase (f-atpase) superfamily"/>
</dbReference>
<dbReference type="GlyGen" id="P63082">
    <property type="glycosylation" value="1 site, 1 O-linked glycan (1 site)"/>
</dbReference>
<dbReference type="iPTMnet" id="P63082"/>
<dbReference type="PhosphoSitePlus" id="P63082"/>
<dbReference type="jPOST" id="P63082"/>
<dbReference type="PaxDb" id="10090-ENSMUSP00000024932"/>
<dbReference type="ProteomicsDB" id="297875"/>
<dbReference type="Pumba" id="P63082"/>
<dbReference type="TopDownProteomics" id="P63082"/>
<dbReference type="Antibodypedia" id="23806">
    <property type="antibodies" value="84 antibodies from 19 providers"/>
</dbReference>
<dbReference type="DNASU" id="11984"/>
<dbReference type="Ensembl" id="ENSMUST00000024932.12">
    <property type="protein sequence ID" value="ENSMUSP00000024932.6"/>
    <property type="gene ID" value="ENSMUSG00000024121.14"/>
</dbReference>
<dbReference type="Ensembl" id="ENSMUST00000098862.9">
    <property type="protein sequence ID" value="ENSMUSP00000111059.2"/>
    <property type="gene ID" value="ENSMUSG00000024121.14"/>
</dbReference>
<dbReference type="GeneID" id="11984"/>
<dbReference type="KEGG" id="mmu:11984"/>
<dbReference type="UCSC" id="uc008aup.2">
    <property type="organism name" value="mouse"/>
</dbReference>
<dbReference type="AGR" id="MGI:88116"/>
<dbReference type="CTD" id="527"/>
<dbReference type="MGI" id="MGI:88116">
    <property type="gene designation" value="Atp6v0c"/>
</dbReference>
<dbReference type="VEuPathDB" id="HostDB:ENSMUSG00000024121"/>
<dbReference type="eggNOG" id="KOG0232">
    <property type="taxonomic scope" value="Eukaryota"/>
</dbReference>
<dbReference type="GeneTree" id="ENSGT00550000074873"/>
<dbReference type="InParanoid" id="P63082"/>
<dbReference type="OMA" id="MSVCPPY"/>
<dbReference type="OrthoDB" id="1744869at2759"/>
<dbReference type="PhylomeDB" id="P63082"/>
<dbReference type="TreeFam" id="TF300025"/>
<dbReference type="Reactome" id="R-MMU-1222556">
    <property type="pathway name" value="ROS and RNS production in phagocytes"/>
</dbReference>
<dbReference type="Reactome" id="R-MMU-6798695">
    <property type="pathway name" value="Neutrophil degranulation"/>
</dbReference>
<dbReference type="Reactome" id="R-MMU-77387">
    <property type="pathway name" value="Insulin receptor recycling"/>
</dbReference>
<dbReference type="Reactome" id="R-MMU-917977">
    <property type="pathway name" value="Transferrin endocytosis and recycling"/>
</dbReference>
<dbReference type="Reactome" id="R-MMU-9639288">
    <property type="pathway name" value="Amino acids regulate mTORC1"/>
</dbReference>
<dbReference type="Reactome" id="R-MMU-983712">
    <property type="pathway name" value="Ion channel transport"/>
</dbReference>
<dbReference type="BioGRID-ORCS" id="11984">
    <property type="hits" value="26 hits in 79 CRISPR screens"/>
</dbReference>
<dbReference type="ChiTaRS" id="Atp6v0c">
    <property type="organism name" value="mouse"/>
</dbReference>
<dbReference type="PRO" id="PR:P63082"/>
<dbReference type="Proteomes" id="UP000000589">
    <property type="component" value="Chromosome 17"/>
</dbReference>
<dbReference type="RNAct" id="P63082">
    <property type="molecule type" value="protein"/>
</dbReference>
<dbReference type="Bgee" id="ENSMUSG00000024121">
    <property type="expression patterns" value="Expressed in Ammon's horn and 127 other cell types or tissues"/>
</dbReference>
<dbReference type="ExpressionAtlas" id="P63082">
    <property type="expression patterns" value="baseline and differential"/>
</dbReference>
<dbReference type="GO" id="GO:0030665">
    <property type="term" value="C:clathrin-coated vesicle membrane"/>
    <property type="evidence" value="ECO:0007669"/>
    <property type="project" value="UniProtKB-SubCell"/>
</dbReference>
<dbReference type="GO" id="GO:0033176">
    <property type="term" value="C:proton-transporting V-type ATPase complex"/>
    <property type="evidence" value="ECO:0000314"/>
    <property type="project" value="MGI"/>
</dbReference>
<dbReference type="GO" id="GO:0033179">
    <property type="term" value="C:proton-transporting V-type ATPase, V0 domain"/>
    <property type="evidence" value="ECO:0000304"/>
    <property type="project" value="MGI"/>
</dbReference>
<dbReference type="GO" id="GO:0030672">
    <property type="term" value="C:synaptic vesicle membrane"/>
    <property type="evidence" value="ECO:0007669"/>
    <property type="project" value="UniProtKB-SubCell"/>
</dbReference>
<dbReference type="GO" id="GO:0016471">
    <property type="term" value="C:vacuolar proton-transporting V-type ATPase complex"/>
    <property type="evidence" value="ECO:0000304"/>
    <property type="project" value="MGI"/>
</dbReference>
<dbReference type="GO" id="GO:0000220">
    <property type="term" value="C:vacuolar proton-transporting V-type ATPase, V0 domain"/>
    <property type="evidence" value="ECO:0000250"/>
    <property type="project" value="UniProtKB"/>
</dbReference>
<dbReference type="GO" id="GO:0008553">
    <property type="term" value="F:P-type proton-exporting transporter activity"/>
    <property type="evidence" value="ECO:0000247"/>
    <property type="project" value="MGI"/>
</dbReference>
<dbReference type="GO" id="GO:0046961">
    <property type="term" value="F:proton-transporting ATPase activity, rotational mechanism"/>
    <property type="evidence" value="ECO:0007669"/>
    <property type="project" value="InterPro"/>
</dbReference>
<dbReference type="GO" id="GO:0031625">
    <property type="term" value="F:ubiquitin protein ligase binding"/>
    <property type="evidence" value="ECO:0007669"/>
    <property type="project" value="Ensembl"/>
</dbReference>
<dbReference type="GO" id="GO:0007042">
    <property type="term" value="P:lysosomal lumen acidification"/>
    <property type="evidence" value="ECO:0000304"/>
    <property type="project" value="MGI"/>
</dbReference>
<dbReference type="GO" id="GO:0030177">
    <property type="term" value="P:positive regulation of Wnt signaling pathway"/>
    <property type="evidence" value="ECO:0007669"/>
    <property type="project" value="Ensembl"/>
</dbReference>
<dbReference type="GO" id="GO:0097401">
    <property type="term" value="P:synaptic vesicle lumen acidification"/>
    <property type="evidence" value="ECO:0000314"/>
    <property type="project" value="SynGO"/>
</dbReference>
<dbReference type="GO" id="GO:0007035">
    <property type="term" value="P:vacuolar acidification"/>
    <property type="evidence" value="ECO:0000304"/>
    <property type="project" value="MGI"/>
</dbReference>
<dbReference type="CDD" id="cd18175">
    <property type="entry name" value="ATP-synt_Vo_c_ATP6C_rpt1"/>
    <property type="match status" value="1"/>
</dbReference>
<dbReference type="CDD" id="cd18176">
    <property type="entry name" value="ATP-synt_Vo_c_ATP6C_rpt2"/>
    <property type="match status" value="1"/>
</dbReference>
<dbReference type="FunFam" id="1.20.120.610:FF:000001">
    <property type="entry name" value="V-type proton ATPase proteolipid subunit"/>
    <property type="match status" value="1"/>
</dbReference>
<dbReference type="Gene3D" id="1.20.120.610">
    <property type="entry name" value="lithium bound rotor ring of v- atpase"/>
    <property type="match status" value="1"/>
</dbReference>
<dbReference type="InterPro" id="IPR002379">
    <property type="entry name" value="ATPase_proteolipid_c-like_dom"/>
</dbReference>
<dbReference type="InterPro" id="IPR000245">
    <property type="entry name" value="ATPase_proteolipid_csu"/>
</dbReference>
<dbReference type="InterPro" id="IPR011555">
    <property type="entry name" value="ATPase_proteolipid_su_C_euk"/>
</dbReference>
<dbReference type="InterPro" id="IPR035921">
    <property type="entry name" value="F/V-ATP_Csub_sf"/>
</dbReference>
<dbReference type="NCBIfam" id="TIGR01100">
    <property type="entry name" value="V_ATP_synt_C"/>
    <property type="match status" value="1"/>
</dbReference>
<dbReference type="PANTHER" id="PTHR10263">
    <property type="entry name" value="V-TYPE PROTON ATPASE PROTEOLIPID SUBUNIT"/>
    <property type="match status" value="1"/>
</dbReference>
<dbReference type="Pfam" id="PF00137">
    <property type="entry name" value="ATP-synt_C"/>
    <property type="match status" value="2"/>
</dbReference>
<dbReference type="PRINTS" id="PR00122">
    <property type="entry name" value="VACATPASE"/>
</dbReference>
<dbReference type="SUPFAM" id="SSF81333">
    <property type="entry name" value="F1F0 ATP synthase subunit C"/>
    <property type="match status" value="2"/>
</dbReference>
<evidence type="ECO:0000250" key="1">
    <source>
        <dbReference type="UniProtKB" id="P23956"/>
    </source>
</evidence>
<evidence type="ECO:0000250" key="2">
    <source>
        <dbReference type="UniProtKB" id="P27449"/>
    </source>
</evidence>
<evidence type="ECO:0000250" key="3">
    <source>
        <dbReference type="UniProtKB" id="P63081"/>
    </source>
</evidence>
<evidence type="ECO:0000255" key="4"/>
<evidence type="ECO:0000269" key="5">
    <source>
    </source>
</evidence>
<evidence type="ECO:0000305" key="6"/>
<sequence length="155" mass="15808">MADIKNNPEYSSFFGVMGASSAMVFSAMGAAYGTAKSGTGIAAMSVMRPELIMKSIIPVVMAGIIAIYGLVVAVLIANSLTDGITLYRSFLQLGAGLSVGLSGLAAGFAIGIVGDAGVRGTAQQPRLFVGMILILIFAEVLGLYGLIVALILSTK</sequence>
<name>VATL_MOUSE</name>
<organism>
    <name type="scientific">Mus musculus</name>
    <name type="common">Mouse</name>
    <dbReference type="NCBI Taxonomy" id="10090"/>
    <lineage>
        <taxon>Eukaryota</taxon>
        <taxon>Metazoa</taxon>
        <taxon>Chordata</taxon>
        <taxon>Craniata</taxon>
        <taxon>Vertebrata</taxon>
        <taxon>Euteleostomi</taxon>
        <taxon>Mammalia</taxon>
        <taxon>Eutheria</taxon>
        <taxon>Euarchontoglires</taxon>
        <taxon>Glires</taxon>
        <taxon>Rodentia</taxon>
        <taxon>Myomorpha</taxon>
        <taxon>Muroidea</taxon>
        <taxon>Muridae</taxon>
        <taxon>Murinae</taxon>
        <taxon>Mus</taxon>
        <taxon>Mus</taxon>
    </lineage>
</organism>
<protein>
    <recommendedName>
        <fullName evidence="6">V-type proton ATPase 16 kDa proteolipid subunit c</fullName>
        <shortName evidence="6">V-ATPase 16 kDa proteolipid subunit c</shortName>
    </recommendedName>
    <alternativeName>
        <fullName>PL16</fullName>
    </alternativeName>
    <alternativeName>
        <fullName evidence="6">Vacuolar proton pump 16 kDa proteolipid subunit c</fullName>
    </alternativeName>
</protein>
<feature type="chain" id="PRO_0000071744" description="V-type proton ATPase 16 kDa proteolipid subunit c">
    <location>
        <begin position="1"/>
        <end position="155"/>
    </location>
</feature>
<feature type="topological domain" description="Lumenal" evidence="4">
    <location>
        <begin position="1"/>
        <end position="10"/>
    </location>
</feature>
<feature type="transmembrane region" description="Helical" evidence="4">
    <location>
        <begin position="11"/>
        <end position="33"/>
    </location>
</feature>
<feature type="topological domain" description="Cytoplasmic" evidence="4">
    <location>
        <begin position="34"/>
        <end position="55"/>
    </location>
</feature>
<feature type="transmembrane region" description="Helical" evidence="4">
    <location>
        <begin position="56"/>
        <end position="76"/>
    </location>
</feature>
<feature type="topological domain" description="Lumenal" evidence="4">
    <location>
        <begin position="77"/>
        <end position="92"/>
    </location>
</feature>
<feature type="transmembrane region" description="Helical" evidence="4">
    <location>
        <begin position="93"/>
        <end position="114"/>
    </location>
</feature>
<feature type="topological domain" description="Cytoplasmic" evidence="4">
    <location>
        <begin position="115"/>
        <end position="131"/>
    </location>
</feature>
<feature type="transmembrane region" description="Helical" evidence="4">
    <location>
        <begin position="132"/>
        <end position="152"/>
    </location>
</feature>
<feature type="topological domain" description="Lumenal" evidence="4">
    <location>
        <begin position="153"/>
        <end position="155"/>
    </location>
</feature>
<feature type="site" description="Essential for proton translocation" evidence="3">
    <location>
        <position position="139"/>
    </location>
</feature>
<gene>
    <name type="primary">Atp6v0c</name>
    <name type="synonym">Atp6c</name>
    <name type="synonym">Atp6l</name>
    <name type="synonym">Atpl</name>
    <name type="synonym">Mvp</name>
</gene>